<keyword id="KW-0997">Cell inner membrane</keyword>
<keyword id="KW-1003">Cell membrane</keyword>
<keyword id="KW-0472">Membrane</keyword>
<keyword id="KW-0812">Transmembrane</keyword>
<keyword id="KW-1133">Transmembrane helix</keyword>
<feature type="chain" id="PRO_1000064989" description="UPF0208 membrane protein YPN_2157">
    <location>
        <begin position="1"/>
        <end position="151"/>
    </location>
</feature>
<feature type="transmembrane region" description="Helical" evidence="1">
    <location>
        <begin position="46"/>
        <end position="66"/>
    </location>
</feature>
<feature type="transmembrane region" description="Helical" evidence="1">
    <location>
        <begin position="69"/>
        <end position="89"/>
    </location>
</feature>
<organism>
    <name type="scientific">Yersinia pestis bv. Antiqua (strain Nepal516)</name>
    <dbReference type="NCBI Taxonomy" id="377628"/>
    <lineage>
        <taxon>Bacteria</taxon>
        <taxon>Pseudomonadati</taxon>
        <taxon>Pseudomonadota</taxon>
        <taxon>Gammaproteobacteria</taxon>
        <taxon>Enterobacterales</taxon>
        <taxon>Yersiniaceae</taxon>
        <taxon>Yersinia</taxon>
    </lineage>
</organism>
<accession>Q1CHP4</accession>
<accession>C4GV85</accession>
<reference key="1">
    <citation type="journal article" date="2006" name="J. Bacteriol.">
        <title>Complete genome sequence of Yersinia pestis strains Antiqua and Nepal516: evidence of gene reduction in an emerging pathogen.</title>
        <authorList>
            <person name="Chain P.S.G."/>
            <person name="Hu P."/>
            <person name="Malfatti S.A."/>
            <person name="Radnedge L."/>
            <person name="Larimer F."/>
            <person name="Vergez L.M."/>
            <person name="Worsham P."/>
            <person name="Chu M.C."/>
            <person name="Andersen G.L."/>
        </authorList>
    </citation>
    <scope>NUCLEOTIDE SEQUENCE [LARGE SCALE GENOMIC DNA]</scope>
    <source>
        <strain>Nepal516</strain>
    </source>
</reference>
<reference key="2">
    <citation type="submission" date="2009-04" db="EMBL/GenBank/DDBJ databases">
        <title>Yersinia pestis Nepal516A whole genome shotgun sequencing project.</title>
        <authorList>
            <person name="Plunkett G. III"/>
            <person name="Anderson B.D."/>
            <person name="Baumler D.J."/>
            <person name="Burland V."/>
            <person name="Cabot E.L."/>
            <person name="Glasner J.D."/>
            <person name="Mau B."/>
            <person name="Neeno-Eckwall E."/>
            <person name="Perna N.T."/>
            <person name="Munk A.C."/>
            <person name="Tapia R."/>
            <person name="Green L.D."/>
            <person name="Rogers Y.C."/>
            <person name="Detter J.C."/>
            <person name="Bruce D.C."/>
            <person name="Brettin T.S."/>
        </authorList>
    </citation>
    <scope>NUCLEOTIDE SEQUENCE [LARGE SCALE GENOMIC DNA]</scope>
    <source>
        <strain>Nepal516</strain>
    </source>
</reference>
<proteinExistence type="inferred from homology"/>
<comment type="subcellular location">
    <subcellularLocation>
        <location evidence="1">Cell inner membrane</location>
        <topology evidence="1">Multi-pass membrane protein</topology>
    </subcellularLocation>
</comment>
<comment type="similarity">
    <text evidence="1">Belongs to the UPF0208 family.</text>
</comment>
<name>Y2157_YERPN</name>
<protein>
    <recommendedName>
        <fullName evidence="1">UPF0208 membrane protein YPN_2157</fullName>
    </recommendedName>
</protein>
<gene>
    <name type="ordered locus">YPN_2157</name>
    <name type="ORF">YP516_2410</name>
</gene>
<dbReference type="EMBL" id="CP000305">
    <property type="protein sequence ID" value="ABG18486.1"/>
    <property type="molecule type" value="Genomic_DNA"/>
</dbReference>
<dbReference type="EMBL" id="ACNQ01000013">
    <property type="protein sequence ID" value="EEO76213.1"/>
    <property type="molecule type" value="Genomic_DNA"/>
</dbReference>
<dbReference type="KEGG" id="ypn:YPN_2157"/>
<dbReference type="HOGENOM" id="CLU_128746_0_0_6"/>
<dbReference type="Proteomes" id="UP000008936">
    <property type="component" value="Chromosome"/>
</dbReference>
<dbReference type="GO" id="GO:0005886">
    <property type="term" value="C:plasma membrane"/>
    <property type="evidence" value="ECO:0007669"/>
    <property type="project" value="UniProtKB-SubCell"/>
</dbReference>
<dbReference type="HAMAP" id="MF_01101">
    <property type="entry name" value="UPF0208"/>
    <property type="match status" value="1"/>
</dbReference>
<dbReference type="InterPro" id="IPR007334">
    <property type="entry name" value="UPF0208"/>
</dbReference>
<dbReference type="NCBIfam" id="NF002493">
    <property type="entry name" value="PRK01816.1"/>
    <property type="match status" value="1"/>
</dbReference>
<dbReference type="Pfam" id="PF04217">
    <property type="entry name" value="DUF412"/>
    <property type="match status" value="1"/>
</dbReference>
<evidence type="ECO:0000255" key="1">
    <source>
        <dbReference type="HAMAP-Rule" id="MF_01101"/>
    </source>
</evidence>
<sequence length="151" mass="17122">MTIKPSDSVSWFQVLQRGQHYMKTWPADKRLAPVFPENRVTVVTRFGIRFMPPLAIFTLTWQIALGGQLGPAIATALFACGLPLQGLWWLGKRAITPLPPTLLQWFHEVRHKLFEAGQAVAPIEPIPTYQSLADLLKRAFKQLDKTFLDDL</sequence>